<reference key="1">
    <citation type="journal article" date="1986" name="J. Biol. Chem.">
        <title>Nucleotide sequence of lysC gene encoding the lysine-sensitive aspartokinase III of Escherichia coli K12. Evolutionary pathway leading to three isofunctional enzymes.</title>
        <authorList>
            <person name="Cassan M."/>
            <person name="Parsot C."/>
            <person name="Cohen G.N."/>
            <person name="Patte J.-C."/>
        </authorList>
    </citation>
    <scope>NUCLEOTIDE SEQUENCE [GENOMIC DNA]</scope>
    <scope>PROTEIN SEQUENCE OF 1-27</scope>
    <source>
        <strain>K12</strain>
    </source>
</reference>
<reference key="2">
    <citation type="journal article" date="1993" name="Nucleic Acids Res.">
        <title>Analysis of the Escherichia coli genome. IV. DNA sequence of the region from 89.2 to 92.8 minutes.</title>
        <authorList>
            <person name="Blattner F.R."/>
            <person name="Burland V.D."/>
            <person name="Plunkett G. III"/>
            <person name="Sofia H.J."/>
            <person name="Daniels D.L."/>
        </authorList>
    </citation>
    <scope>NUCLEOTIDE SEQUENCE [LARGE SCALE GENOMIC DNA]</scope>
    <source>
        <strain>K12 / MG1655 / ATCC 47076</strain>
    </source>
</reference>
<reference key="3">
    <citation type="journal article" date="1997" name="Science">
        <title>The complete genome sequence of Escherichia coli K-12.</title>
        <authorList>
            <person name="Blattner F.R."/>
            <person name="Plunkett G. III"/>
            <person name="Bloch C.A."/>
            <person name="Perna N.T."/>
            <person name="Burland V."/>
            <person name="Riley M."/>
            <person name="Collado-Vides J."/>
            <person name="Glasner J.D."/>
            <person name="Rode C.K."/>
            <person name="Mayhew G.F."/>
            <person name="Gregor J."/>
            <person name="Davis N.W."/>
            <person name="Kirkpatrick H.A."/>
            <person name="Goeden M.A."/>
            <person name="Rose D.J."/>
            <person name="Mau B."/>
            <person name="Shao Y."/>
        </authorList>
    </citation>
    <scope>NUCLEOTIDE SEQUENCE [LARGE SCALE GENOMIC DNA]</scope>
    <source>
        <strain>K12 / MG1655 / ATCC 47076</strain>
    </source>
</reference>
<reference key="4">
    <citation type="journal article" date="2006" name="Mol. Syst. Biol.">
        <title>Highly accurate genome sequences of Escherichia coli K-12 strains MG1655 and W3110.</title>
        <authorList>
            <person name="Hayashi K."/>
            <person name="Morooka N."/>
            <person name="Yamamoto Y."/>
            <person name="Fujita K."/>
            <person name="Isono K."/>
            <person name="Choi S."/>
            <person name="Ohtsubo E."/>
            <person name="Baba T."/>
            <person name="Wanner B.L."/>
            <person name="Mori H."/>
            <person name="Horiuchi T."/>
        </authorList>
    </citation>
    <scope>NUCLEOTIDE SEQUENCE [LARGE SCALE GENOMIC DNA]</scope>
    <source>
        <strain>K12 / W3110 / ATCC 27325 / DSM 5911</strain>
    </source>
</reference>
<reference key="5">
    <citation type="journal article" date="1983" name="Nucleic Acids Res.">
        <title>Nucleotide sequence of the promoter region of the E. coli lysC gene.</title>
        <authorList>
            <person name="Cassan M."/>
            <person name="Ronceray J."/>
            <person name="Patte J.-C."/>
        </authorList>
    </citation>
    <scope>NUCLEOTIDE SEQUENCE [GENOMIC DNA] OF 1-20</scope>
</reference>
<reference key="6">
    <citation type="journal article" date="2003" name="J. Mol. Biol.">
        <title>Site-directed mutagenesis of Escherichia coli acetylglutamate kinase and aspartokinase III probes the catalytic and substrate-binding mechanisms of these amino acid kinase family enzymes and allows three-dimensional modelling of aspartokinase.</title>
        <authorList>
            <person name="Marco-Marin C."/>
            <person name="Ramon-Maiques S."/>
            <person name="Tavarez S."/>
            <person name="Rubio V."/>
        </authorList>
    </citation>
    <scope>SUBUNIT</scope>
    <scope>INVOLVEMENT OF C-TERMINUS IN DIMERIZATION</scope>
    <scope>MUTAGENESIS OF LYS-8; GLU-119; ARG-198 AND ASP-202</scope>
    <scope>CATALYTIC ACTIVITY</scope>
</reference>
<reference evidence="5 6" key="7">
    <citation type="journal article" date="2006" name="J. Biol. Chem.">
        <title>Structures of R- and T-state Escherichia coli aspartokinase III. Mechanisms of the allosteric transition and inhibition by lysine.</title>
        <authorList>
            <person name="Kotaka M."/>
            <person name="Ren J."/>
            <person name="Lockyer M."/>
            <person name="Hawkins A.R."/>
            <person name="Stammers D.K."/>
        </authorList>
    </citation>
    <scope>X-RAY CRYSTALLOGRAPHY (2.5 ANGSTROMS) IN COMPLEXES WITH ADP; ASPARTATE AND LYSINE INHIBITOR</scope>
    <scope>SUBUNIT</scope>
    <scope>ACTIVITY REGULATION</scope>
</reference>
<dbReference type="EC" id="2.7.2.4" evidence="2"/>
<dbReference type="EMBL" id="M11812">
    <property type="protein sequence ID" value="AAA24095.1"/>
    <property type="molecule type" value="Genomic_DNA"/>
</dbReference>
<dbReference type="EMBL" id="U00006">
    <property type="protein sequence ID" value="AAC43118.1"/>
    <property type="molecule type" value="Genomic_DNA"/>
</dbReference>
<dbReference type="EMBL" id="U00096">
    <property type="protein sequence ID" value="AAC76994.1"/>
    <property type="molecule type" value="Genomic_DNA"/>
</dbReference>
<dbReference type="EMBL" id="AP009048">
    <property type="protein sequence ID" value="BAE78026.1"/>
    <property type="molecule type" value="Genomic_DNA"/>
</dbReference>
<dbReference type="EMBL" id="X00008">
    <property type="protein sequence ID" value="CAA24910.1"/>
    <property type="molecule type" value="Genomic_DNA"/>
</dbReference>
<dbReference type="PIR" id="G65209">
    <property type="entry name" value="KIECD3"/>
</dbReference>
<dbReference type="RefSeq" id="NP_418448.1">
    <property type="nucleotide sequence ID" value="NC_000913.3"/>
</dbReference>
<dbReference type="RefSeq" id="WP_001290310.1">
    <property type="nucleotide sequence ID" value="NZ_SSZK01000049.1"/>
</dbReference>
<dbReference type="PDB" id="2J0W">
    <property type="method" value="X-ray"/>
    <property type="resolution" value="2.50 A"/>
    <property type="chains" value="A=1-449"/>
</dbReference>
<dbReference type="PDB" id="2J0X">
    <property type="method" value="X-ray"/>
    <property type="resolution" value="2.80 A"/>
    <property type="chains" value="A/B=1-449"/>
</dbReference>
<dbReference type="PDBsum" id="2J0W"/>
<dbReference type="PDBsum" id="2J0X"/>
<dbReference type="PCDDB" id="P08660"/>
<dbReference type="SMR" id="P08660"/>
<dbReference type="BioGRID" id="4261955">
    <property type="interactions" value="8"/>
</dbReference>
<dbReference type="FunCoup" id="P08660">
    <property type="interactions" value="554"/>
</dbReference>
<dbReference type="STRING" id="511145.b4024"/>
<dbReference type="jPOST" id="P08660"/>
<dbReference type="PaxDb" id="511145-b4024"/>
<dbReference type="DNASU" id="948531"/>
<dbReference type="EnsemblBacteria" id="AAC76994">
    <property type="protein sequence ID" value="AAC76994"/>
    <property type="gene ID" value="b4024"/>
</dbReference>
<dbReference type="GeneID" id="948531"/>
<dbReference type="KEGG" id="ecj:JW3984"/>
<dbReference type="KEGG" id="eco:b4024"/>
<dbReference type="KEGG" id="ecoc:C3026_21735"/>
<dbReference type="PATRIC" id="fig|1411691.4.peg.2689"/>
<dbReference type="EchoBASE" id="EB0545"/>
<dbReference type="eggNOG" id="COG0527">
    <property type="taxonomic scope" value="Bacteria"/>
</dbReference>
<dbReference type="HOGENOM" id="CLU_009116_6_0_6"/>
<dbReference type="InParanoid" id="P08660"/>
<dbReference type="OMA" id="YEIWTDV"/>
<dbReference type="OrthoDB" id="9799110at2"/>
<dbReference type="PhylomeDB" id="P08660"/>
<dbReference type="BioCyc" id="EcoCyc:ASPKINIII-MONOMER"/>
<dbReference type="BioCyc" id="MetaCyc:ASPKINIII-MONOMER"/>
<dbReference type="BRENDA" id="2.7.2.4">
    <property type="organism ID" value="2026"/>
</dbReference>
<dbReference type="SABIO-RK" id="P08660"/>
<dbReference type="UniPathway" id="UPA00034">
    <property type="reaction ID" value="UER00015"/>
</dbReference>
<dbReference type="EvolutionaryTrace" id="P08660"/>
<dbReference type="PRO" id="PR:P08660"/>
<dbReference type="Proteomes" id="UP000000625">
    <property type="component" value="Chromosome"/>
</dbReference>
<dbReference type="GO" id="GO:0005829">
    <property type="term" value="C:cytosol"/>
    <property type="evidence" value="ECO:0000314"/>
    <property type="project" value="EcoCyc"/>
</dbReference>
<dbReference type="GO" id="GO:0004072">
    <property type="term" value="F:aspartate kinase activity"/>
    <property type="evidence" value="ECO:0000314"/>
    <property type="project" value="EcoCyc"/>
</dbReference>
<dbReference type="GO" id="GO:0005524">
    <property type="term" value="F:ATP binding"/>
    <property type="evidence" value="ECO:0007669"/>
    <property type="project" value="UniProtKB-KW"/>
</dbReference>
<dbReference type="GO" id="GO:0042803">
    <property type="term" value="F:protein homodimerization activity"/>
    <property type="evidence" value="ECO:0000353"/>
    <property type="project" value="EcoCyc"/>
</dbReference>
<dbReference type="GO" id="GO:0009090">
    <property type="term" value="P:homoserine biosynthetic process"/>
    <property type="evidence" value="ECO:0000314"/>
    <property type="project" value="EcoCyc"/>
</dbReference>
<dbReference type="GO" id="GO:0009089">
    <property type="term" value="P:lysine biosynthetic process via diaminopimelate"/>
    <property type="evidence" value="ECO:0000314"/>
    <property type="project" value="EcoCyc"/>
</dbReference>
<dbReference type="CDD" id="cd04258">
    <property type="entry name" value="AAK_AKiii-LysC-EC"/>
    <property type="match status" value="1"/>
</dbReference>
<dbReference type="CDD" id="cd04917">
    <property type="entry name" value="ACT_AKiii-LysC-EC_2"/>
    <property type="match status" value="1"/>
</dbReference>
<dbReference type="FunFam" id="1.20.120.1320:FF:000002">
    <property type="entry name" value="Aspartokinase"/>
    <property type="match status" value="1"/>
</dbReference>
<dbReference type="FunFam" id="3.30.70.260:FF:000017">
    <property type="entry name" value="Aspartokinase"/>
    <property type="match status" value="1"/>
</dbReference>
<dbReference type="FunFam" id="3.30.70.260:FF:000023">
    <property type="entry name" value="Aspartokinase"/>
    <property type="match status" value="1"/>
</dbReference>
<dbReference type="Gene3D" id="3.30.70.260">
    <property type="match status" value="2"/>
</dbReference>
<dbReference type="Gene3D" id="3.40.1160.10">
    <property type="entry name" value="Acetylglutamate kinase-like"/>
    <property type="match status" value="1"/>
</dbReference>
<dbReference type="Gene3D" id="1.20.120.1320">
    <property type="entry name" value="Aspartokinase, catalytic domain"/>
    <property type="match status" value="1"/>
</dbReference>
<dbReference type="InterPro" id="IPR036393">
    <property type="entry name" value="AceGlu_kinase-like_sf"/>
</dbReference>
<dbReference type="InterPro" id="IPR045865">
    <property type="entry name" value="ACT-like_dom_sf"/>
</dbReference>
<dbReference type="InterPro" id="IPR054352">
    <property type="entry name" value="ACT_Aspartokinase"/>
</dbReference>
<dbReference type="InterPro" id="IPR002912">
    <property type="entry name" value="ACT_dom"/>
</dbReference>
<dbReference type="InterPro" id="IPR041745">
    <property type="entry name" value="AKiii-LysC-EC"/>
</dbReference>
<dbReference type="InterPro" id="IPR001048">
    <property type="entry name" value="Asp/Glu/Uridylate_kinase"/>
</dbReference>
<dbReference type="InterPro" id="IPR005260">
    <property type="entry name" value="Asp_kin_monofn"/>
</dbReference>
<dbReference type="InterPro" id="IPR001341">
    <property type="entry name" value="Asp_kinase"/>
</dbReference>
<dbReference type="InterPro" id="IPR042199">
    <property type="entry name" value="AsparK_Bifunc_asparK/hSer_DH"/>
</dbReference>
<dbReference type="InterPro" id="IPR018042">
    <property type="entry name" value="Aspartate_kinase_CS"/>
</dbReference>
<dbReference type="InterPro" id="IPR047962">
    <property type="entry name" value="LysC_ACT_2"/>
</dbReference>
<dbReference type="NCBIfam" id="TIGR00656">
    <property type="entry name" value="asp_kin_monofn"/>
    <property type="match status" value="1"/>
</dbReference>
<dbReference type="NCBIfam" id="TIGR00657">
    <property type="entry name" value="asp_kinases"/>
    <property type="match status" value="1"/>
</dbReference>
<dbReference type="NCBIfam" id="NF006570">
    <property type="entry name" value="PRK09084.1"/>
    <property type="match status" value="1"/>
</dbReference>
<dbReference type="PANTHER" id="PTHR21499">
    <property type="entry name" value="ASPARTATE KINASE"/>
    <property type="match status" value="1"/>
</dbReference>
<dbReference type="PANTHER" id="PTHR21499:SF59">
    <property type="entry name" value="ASPARTOKINASE"/>
    <property type="match status" value="1"/>
</dbReference>
<dbReference type="Pfam" id="PF00696">
    <property type="entry name" value="AA_kinase"/>
    <property type="match status" value="1"/>
</dbReference>
<dbReference type="Pfam" id="PF22468">
    <property type="entry name" value="ACT_9"/>
    <property type="match status" value="1"/>
</dbReference>
<dbReference type="PIRSF" id="PIRSF000726">
    <property type="entry name" value="Asp_kin"/>
    <property type="match status" value="1"/>
</dbReference>
<dbReference type="SUPFAM" id="SSF55021">
    <property type="entry name" value="ACT-like"/>
    <property type="match status" value="2"/>
</dbReference>
<dbReference type="SUPFAM" id="SSF53633">
    <property type="entry name" value="Carbamate kinase-like"/>
    <property type="match status" value="1"/>
</dbReference>
<dbReference type="PROSITE" id="PS51671">
    <property type="entry name" value="ACT"/>
    <property type="match status" value="1"/>
</dbReference>
<dbReference type="PROSITE" id="PS00324">
    <property type="entry name" value="ASPARTOKINASE"/>
    <property type="match status" value="1"/>
</dbReference>
<comment type="catalytic activity">
    <reaction evidence="2">
        <text>L-aspartate + ATP = 4-phospho-L-aspartate + ADP</text>
        <dbReference type="Rhea" id="RHEA:23776"/>
        <dbReference type="ChEBI" id="CHEBI:29991"/>
        <dbReference type="ChEBI" id="CHEBI:30616"/>
        <dbReference type="ChEBI" id="CHEBI:57535"/>
        <dbReference type="ChEBI" id="CHEBI:456216"/>
        <dbReference type="EC" id="2.7.2.4"/>
    </reaction>
</comment>
<comment type="activity regulation">
    <text evidence="3">Synthesis and activity are sensitive to the allosteric inhibitor lysine, one of the end metabolites of the aspartic acid family branched pathway.</text>
</comment>
<comment type="pathway">
    <text>Amino-acid biosynthesis; L-lysine biosynthesis via DAP pathway; (S)-tetrahydrodipicolinate from L-aspartate: step 1/4.</text>
</comment>
<comment type="subunit">
    <text evidence="2 3">Homodimer. In the inactive form a homotetramer is formed.</text>
</comment>
<comment type="miscellaneous">
    <text>Aspartokinases I and II also catalyze the same reaction(s).</text>
</comment>
<comment type="similarity">
    <text evidence="4">Belongs to the aspartokinase family.</text>
</comment>
<keyword id="KW-0002">3D-structure</keyword>
<keyword id="KW-0021">Allosteric enzyme</keyword>
<keyword id="KW-0028">Amino-acid biosynthesis</keyword>
<keyword id="KW-0067">ATP-binding</keyword>
<keyword id="KW-0903">Direct protein sequencing</keyword>
<keyword id="KW-0418">Kinase</keyword>
<keyword id="KW-0457">Lysine biosynthesis</keyword>
<keyword id="KW-0547">Nucleotide-binding</keyword>
<keyword id="KW-1185">Reference proteome</keyword>
<keyword id="KW-0808">Transferase</keyword>
<proteinExistence type="evidence at protein level"/>
<gene>
    <name type="primary">lysC</name>
    <name type="synonym">apk</name>
    <name type="ordered locus">b4024</name>
    <name type="ordered locus">JW3984</name>
</gene>
<organism>
    <name type="scientific">Escherichia coli (strain K12)</name>
    <dbReference type="NCBI Taxonomy" id="83333"/>
    <lineage>
        <taxon>Bacteria</taxon>
        <taxon>Pseudomonadati</taxon>
        <taxon>Pseudomonadota</taxon>
        <taxon>Gammaproteobacteria</taxon>
        <taxon>Enterobacterales</taxon>
        <taxon>Enterobacteriaceae</taxon>
        <taxon>Escherichia</taxon>
    </lineage>
</organism>
<accession>P08660</accession>
<accession>Q2M6T0</accession>
<feature type="initiator methionine" description="Removed">
    <location>
        <position position="1"/>
    </location>
</feature>
<feature type="chain" id="PRO_0000066676" description="Lysine-sensitive aspartokinase 3">
    <location>
        <begin position="2"/>
        <end position="449"/>
    </location>
</feature>
<feature type="domain" description="ACT" evidence="1">
    <location>
        <begin position="313"/>
        <end position="394"/>
    </location>
</feature>
<feature type="region of interest" description="Aspartokinase">
    <location>
        <begin position="2"/>
        <end position="245"/>
    </location>
</feature>
<feature type="region of interest" description="Interface">
    <location>
        <begin position="246"/>
        <end position="449"/>
    </location>
</feature>
<feature type="region of interest" description="Required for homodimerization">
    <location>
        <begin position="299"/>
        <end position="449"/>
    </location>
</feature>
<feature type="binding site">
    <location>
        <begin position="8"/>
        <end position="11"/>
    </location>
    <ligand>
        <name>ATP</name>
        <dbReference type="ChEBI" id="CHEBI:30616"/>
    </ligand>
</feature>
<feature type="binding site">
    <location>
        <position position="45"/>
    </location>
    <ligand>
        <name>substrate</name>
    </ligand>
</feature>
<feature type="binding site">
    <location>
        <position position="119"/>
    </location>
    <ligand>
        <name>substrate</name>
    </ligand>
</feature>
<feature type="binding site">
    <location>
        <begin position="198"/>
        <end position="201"/>
    </location>
    <ligand>
        <name>substrate</name>
    </ligand>
</feature>
<feature type="binding site">
    <location>
        <begin position="221"/>
        <end position="222"/>
    </location>
    <ligand>
        <name>ATP</name>
        <dbReference type="ChEBI" id="CHEBI:30616"/>
    </ligand>
</feature>
<feature type="binding site">
    <location>
        <position position="227"/>
    </location>
    <ligand>
        <name>ATP</name>
        <dbReference type="ChEBI" id="CHEBI:30616"/>
    </ligand>
</feature>
<feature type="binding site">
    <location>
        <position position="232"/>
    </location>
    <ligand>
        <name>ATP</name>
        <dbReference type="ChEBI" id="CHEBI:30616"/>
    </ligand>
</feature>
<feature type="binding site">
    <location>
        <begin position="257"/>
        <end position="258"/>
    </location>
    <ligand>
        <name>ATP</name>
        <dbReference type="ChEBI" id="CHEBI:30616"/>
    </ligand>
</feature>
<feature type="binding site" evidence="6">
    <location>
        <position position="318"/>
    </location>
    <ligand>
        <name>L-lysine</name>
        <dbReference type="ChEBI" id="CHEBI:32551"/>
        <note>allosteric inhibitor; ligand shared between homodimeric partners</note>
    </ligand>
</feature>
<feature type="binding site" evidence="6">
    <location>
        <position position="321"/>
    </location>
    <ligand>
        <name>L-lysine</name>
        <dbReference type="ChEBI" id="CHEBI:32551"/>
        <note>allosteric inhibitor; ligand shared between homodimeric partners</note>
    </ligand>
</feature>
<feature type="binding site" evidence="6">
    <location>
        <begin position="324"/>
        <end position="325"/>
    </location>
    <ligand>
        <name>L-lysine</name>
        <dbReference type="ChEBI" id="CHEBI:32551"/>
        <note>allosteric inhibitor; ligand shared between homodimeric partners</note>
    </ligand>
</feature>
<feature type="binding site" evidence="6">
    <location>
        <begin position="338"/>
        <end position="340"/>
    </location>
    <ligand>
        <name>L-lysine</name>
        <dbReference type="ChEBI" id="CHEBI:32551"/>
        <note>allosteric inhibitor; ligand shared between homodimeric partners</note>
    </ligand>
</feature>
<feature type="binding site" evidence="6">
    <location>
        <begin position="345"/>
        <end position="346"/>
    </location>
    <ligand>
        <name>L-lysine</name>
        <dbReference type="ChEBI" id="CHEBI:32551"/>
        <note>allosteric inhibitor; ligand shared between homodimeric partners</note>
    </ligand>
</feature>
<feature type="mutagenesis site" description="Reduces activity about 98%. Increases KM for aspartate about 40-fold, enzyme is less sensitive to lysine inhibition." evidence="2">
    <original>K</original>
    <variation>R</variation>
    <location>
        <position position="8"/>
    </location>
</feature>
<feature type="mutagenesis site" description="Increases KM for aspartate about 3000-fold." evidence="2">
    <original>E</original>
    <variation>D</variation>
    <location>
        <position position="119"/>
    </location>
</feature>
<feature type="mutagenesis site" description="Increases KM for aspartate about 200-fold." evidence="2">
    <original>R</original>
    <variation>K</variation>
    <location>
        <position position="198"/>
    </location>
</feature>
<feature type="mutagenesis site" description="Reduces activity about 98%. Increases KM for aspartate about 40-fold, enzyme is less sensitive to lysine inhibition." evidence="2">
    <original>D</original>
    <variation>E</variation>
    <location>
        <position position="202"/>
    </location>
</feature>
<feature type="sequence conflict" description="In Ref. 5; CAA24910." evidence="4" ref="5">
    <original>VA</original>
    <variation>AS</variation>
    <location>
        <begin position="14"/>
        <end position="15"/>
    </location>
</feature>
<feature type="sequence conflict" description="In Ref. 5; CAA24910." evidence="4" ref="5">
    <original>M</original>
    <variation>E</variation>
    <location>
        <position position="20"/>
    </location>
</feature>
<feature type="sequence conflict" description="In Ref. 1; AAA24095." evidence="4" ref="1">
    <original>G</original>
    <variation>C</variation>
    <location>
        <position position="58"/>
    </location>
</feature>
<feature type="sequence conflict" description="In Ref. 1; AAA24095." evidence="4" ref="1">
    <original>G</original>
    <variation>A</variation>
    <location>
        <position position="401"/>
    </location>
</feature>
<feature type="strand" evidence="7">
    <location>
        <begin position="5"/>
        <end position="9"/>
    </location>
</feature>
<feature type="helix" evidence="7">
    <location>
        <begin position="12"/>
        <end position="14"/>
    </location>
</feature>
<feature type="helix" evidence="7">
    <location>
        <begin position="17"/>
        <end position="27"/>
    </location>
</feature>
<feature type="strand" evidence="7">
    <location>
        <begin position="33"/>
        <end position="38"/>
    </location>
</feature>
<feature type="helix" evidence="7">
    <location>
        <begin position="44"/>
        <end position="51"/>
    </location>
</feature>
<feature type="helix" evidence="7">
    <location>
        <begin position="57"/>
        <end position="75"/>
    </location>
</feature>
<feature type="strand" evidence="7">
    <location>
        <begin position="78"/>
        <end position="80"/>
    </location>
</feature>
<feature type="helix" evidence="7">
    <location>
        <begin position="82"/>
        <end position="102"/>
    </location>
</feature>
<feature type="helix" evidence="7">
    <location>
        <begin position="108"/>
        <end position="131"/>
    </location>
</feature>
<feature type="turn" evidence="8">
    <location>
        <begin position="132"/>
        <end position="134"/>
    </location>
</feature>
<feature type="strand" evidence="7">
    <location>
        <begin position="137"/>
        <end position="139"/>
    </location>
</feature>
<feature type="helix" evidence="7">
    <location>
        <begin position="142"/>
        <end position="144"/>
    </location>
</feature>
<feature type="helix" evidence="7">
    <location>
        <begin position="159"/>
        <end position="169"/>
    </location>
</feature>
<feature type="helix" evidence="7">
    <location>
        <begin position="171"/>
        <end position="176"/>
    </location>
</feature>
<feature type="strand" evidence="7">
    <location>
        <begin position="177"/>
        <end position="187"/>
    </location>
</feature>
<feature type="strand" evidence="7">
    <location>
        <begin position="193"/>
        <end position="195"/>
    </location>
</feature>
<feature type="helix" evidence="7">
    <location>
        <begin position="200"/>
        <end position="211"/>
    </location>
</feature>
<feature type="strand" evidence="7">
    <location>
        <begin position="215"/>
        <end position="229"/>
    </location>
</feature>
<feature type="turn" evidence="7">
    <location>
        <begin position="231"/>
        <end position="233"/>
    </location>
</feature>
<feature type="strand" evidence="7">
    <location>
        <begin position="239"/>
        <end position="244"/>
    </location>
</feature>
<feature type="helix" evidence="7">
    <location>
        <begin position="245"/>
        <end position="253"/>
    </location>
</feature>
<feature type="turn" evidence="7">
    <location>
        <begin position="261"/>
        <end position="263"/>
    </location>
</feature>
<feature type="helix" evidence="7">
    <location>
        <begin position="264"/>
        <end position="270"/>
    </location>
</feature>
<feature type="strand" evidence="7">
    <location>
        <begin position="274"/>
        <end position="280"/>
    </location>
</feature>
<feature type="helix" evidence="8">
    <location>
        <begin position="282"/>
        <end position="284"/>
    </location>
</feature>
<feature type="strand" evidence="7">
    <location>
        <begin position="287"/>
        <end position="291"/>
    </location>
</feature>
<feature type="strand" evidence="7">
    <location>
        <begin position="298"/>
        <end position="313"/>
    </location>
</feature>
<feature type="helix" evidence="8">
    <location>
        <begin position="316"/>
        <end position="318"/>
    </location>
</feature>
<feature type="helix" evidence="7">
    <location>
        <begin position="321"/>
        <end position="328"/>
    </location>
</feature>
<feature type="turn" evidence="7">
    <location>
        <begin position="329"/>
        <end position="336"/>
    </location>
</feature>
<feature type="strand" evidence="7">
    <location>
        <begin position="340"/>
        <end position="345"/>
    </location>
</feature>
<feature type="strand" evidence="7">
    <location>
        <begin position="348"/>
        <end position="353"/>
    </location>
</feature>
<feature type="helix" evidence="7">
    <location>
        <begin position="368"/>
        <end position="377"/>
    </location>
</feature>
<feature type="strand" evidence="7">
    <location>
        <begin position="380"/>
        <end position="395"/>
    </location>
</feature>
<feature type="strand" evidence="7">
    <location>
        <begin position="399"/>
        <end position="401"/>
    </location>
</feature>
<feature type="helix" evidence="7">
    <location>
        <begin position="402"/>
        <end position="407"/>
    </location>
</feature>
<feature type="helix" evidence="8">
    <location>
        <begin position="408"/>
        <end position="410"/>
    </location>
</feature>
<feature type="strand" evidence="7">
    <location>
        <begin position="417"/>
        <end position="419"/>
    </location>
</feature>
<feature type="strand" evidence="7">
    <location>
        <begin position="426"/>
        <end position="432"/>
    </location>
</feature>
<feature type="helix" evidence="7">
    <location>
        <begin position="433"/>
        <end position="435"/>
    </location>
</feature>
<feature type="helix" evidence="7">
    <location>
        <begin position="436"/>
        <end position="448"/>
    </location>
</feature>
<protein>
    <recommendedName>
        <fullName>Lysine-sensitive aspartokinase 3</fullName>
        <ecNumber evidence="2">2.7.2.4</ecNumber>
    </recommendedName>
    <alternativeName>
        <fullName>Aspartate kinase III</fullName>
        <shortName>AKIII</shortName>
    </alternativeName>
    <alternativeName>
        <fullName>Lysine-sensitive aspartokinase III</fullName>
    </alternativeName>
</protein>
<sequence length="449" mass="48532">MSEIVVSKFGGTSVADFDAMNRSADIVLSDANVRLVVLSASAGITNLLVALAEGLEPGERFEKLDAIRNIQFAILERLRYPNVIREEIERLLENITVLAEAAALATSPALTDELVSHGELMSTLLFVEILRERDVQAQWFDVRKVMRTNDRFGRAEPDIAALAELAALQLLPRLNEGLVITQGFIGSENKGRTTTLGRGGSDYTAALLAEALHASRVDIWTDVPGIYTTDPRVVSAAKRIDEIAFAEAAEMATFGAKVLHPATLLPAVRSDIPVFVGSSKDPRAGGTLVCNKTENPPLFRALALRRNQTLLTLHSLNMLHSRGFLAEVFGILARHNISVDLITTSEVSVALTLDTTGSTSTGDTLLTQSLLMELSALCRVEVEEGLALVALIGNDLSKACGVGKEVFGVLEPFNIRMICYGASSHNLCFLVPGEDAEQVVQKLHSNLFE</sequence>
<name>AK3_ECOLI</name>
<evidence type="ECO:0000255" key="1">
    <source>
        <dbReference type="PROSITE-ProRule" id="PRU01007"/>
    </source>
</evidence>
<evidence type="ECO:0000269" key="2">
    <source>
    </source>
</evidence>
<evidence type="ECO:0000269" key="3">
    <source>
    </source>
</evidence>
<evidence type="ECO:0000305" key="4"/>
<evidence type="ECO:0007744" key="5">
    <source>
        <dbReference type="PDB" id="2J0W"/>
    </source>
</evidence>
<evidence type="ECO:0007744" key="6">
    <source>
        <dbReference type="PDB" id="2J0X"/>
    </source>
</evidence>
<evidence type="ECO:0007829" key="7">
    <source>
        <dbReference type="PDB" id="2J0W"/>
    </source>
</evidence>
<evidence type="ECO:0007829" key="8">
    <source>
        <dbReference type="PDB" id="2J0X"/>
    </source>
</evidence>